<accession>Q8VG43</accession>
<feature type="chain" id="PRO_0000150832" description="Olfactory receptor 5P52">
    <location>
        <begin position="1"/>
        <end position="310"/>
    </location>
</feature>
<feature type="topological domain" description="Extracellular" evidence="1">
    <location>
        <begin position="1"/>
        <end position="25"/>
    </location>
</feature>
<feature type="transmembrane region" description="Helical; Name=1" evidence="1">
    <location>
        <begin position="26"/>
        <end position="46"/>
    </location>
</feature>
<feature type="topological domain" description="Cytoplasmic" evidence="1">
    <location>
        <begin position="47"/>
        <end position="54"/>
    </location>
</feature>
<feature type="transmembrane region" description="Helical; Name=2" evidence="1">
    <location>
        <begin position="55"/>
        <end position="75"/>
    </location>
</feature>
<feature type="topological domain" description="Extracellular" evidence="1">
    <location>
        <begin position="76"/>
        <end position="99"/>
    </location>
</feature>
<feature type="transmembrane region" description="Helical; Name=3" evidence="1">
    <location>
        <begin position="100"/>
        <end position="120"/>
    </location>
</feature>
<feature type="topological domain" description="Cytoplasmic" evidence="1">
    <location>
        <begin position="121"/>
        <end position="133"/>
    </location>
</feature>
<feature type="transmembrane region" description="Helical; Name=4" evidence="1">
    <location>
        <begin position="134"/>
        <end position="154"/>
    </location>
</feature>
<feature type="topological domain" description="Extracellular" evidence="1">
    <location>
        <begin position="155"/>
        <end position="196"/>
    </location>
</feature>
<feature type="transmembrane region" description="Helical; Name=5" evidence="1">
    <location>
        <begin position="197"/>
        <end position="217"/>
    </location>
</feature>
<feature type="topological domain" description="Cytoplasmic" evidence="1">
    <location>
        <begin position="218"/>
        <end position="237"/>
    </location>
</feature>
<feature type="transmembrane region" description="Helical; Name=6" evidence="1">
    <location>
        <begin position="238"/>
        <end position="258"/>
    </location>
</feature>
<feature type="topological domain" description="Extracellular" evidence="1">
    <location>
        <begin position="259"/>
        <end position="271"/>
    </location>
</feature>
<feature type="transmembrane region" description="Helical; Name=7" evidence="1">
    <location>
        <begin position="272"/>
        <end position="292"/>
    </location>
</feature>
<feature type="topological domain" description="Cytoplasmic" evidence="1">
    <location>
        <begin position="293"/>
        <end position="310"/>
    </location>
</feature>
<feature type="glycosylation site" description="N-linked (GlcNAc...) asparagine" evidence="1">
    <location>
        <position position="5"/>
    </location>
</feature>
<feature type="disulfide bond" evidence="2">
    <location>
        <begin position="97"/>
        <end position="189"/>
    </location>
</feature>
<evidence type="ECO:0000255" key="1"/>
<evidence type="ECO:0000255" key="2">
    <source>
        <dbReference type="PROSITE-ProRule" id="PRU00521"/>
    </source>
</evidence>
<evidence type="ECO:0000305" key="3"/>
<evidence type="ECO:0000312" key="4">
    <source>
        <dbReference type="MGI" id="MGI:3030306"/>
    </source>
</evidence>
<gene>
    <name evidence="4" type="primary">Or5p52</name>
    <name evidence="4" type="synonym">Mor204-5</name>
    <name evidence="4" type="synonym">Olfr472</name>
</gene>
<comment type="function">
    <text>Potential odorant receptor.</text>
</comment>
<comment type="subcellular location">
    <subcellularLocation>
        <location evidence="3">Cell membrane</location>
        <topology evidence="1">Multi-pass membrane protein</topology>
    </subcellularLocation>
</comment>
<comment type="similarity">
    <text evidence="2">Belongs to the G-protein coupled receptor 1 family.</text>
</comment>
<proteinExistence type="inferred from homology"/>
<reference key="1">
    <citation type="journal article" date="2002" name="Nat. Neurosci.">
        <title>The olfactory receptor gene superfamily of the mouse.</title>
        <authorList>
            <person name="Zhang X."/>
            <person name="Firestein S."/>
        </authorList>
    </citation>
    <scope>NUCLEOTIDE SEQUENCE [GENOMIC DNA]</scope>
</reference>
<reference key="2">
    <citation type="journal article" date="2002" name="Hum. Mol. Genet.">
        <title>Different evolutionary processes shaped the mouse and human olfactory receptor gene families.</title>
        <authorList>
            <person name="Young J.M."/>
            <person name="Friedman C."/>
            <person name="Williams E.M."/>
            <person name="Ross J.A."/>
            <person name="Tonnes-Priddy L."/>
            <person name="Trask B.J."/>
        </authorList>
    </citation>
    <scope>NUCLEOTIDE SEQUENCE [GENOMIC DNA]</scope>
</reference>
<reference key="3">
    <citation type="journal article" date="2002" name="Hum. Mol. Genet.">
        <authorList>
            <person name="Young J.M."/>
            <person name="Friedman C."/>
            <person name="Williams E.M."/>
            <person name="Ross J.A."/>
            <person name="Tonnes-Priddy L."/>
            <person name="Trask B.J."/>
        </authorList>
    </citation>
    <scope>ERRATUM OF PUBMED:11875048</scope>
</reference>
<name>O5P52_MOUSE</name>
<protein>
    <recommendedName>
        <fullName evidence="3">Olfactory receptor 5P52</fullName>
    </recommendedName>
    <alternativeName>
        <fullName>Olfactory receptor 204-5</fullName>
    </alternativeName>
    <alternativeName>
        <fullName>Olfactory receptor 472</fullName>
    </alternativeName>
</protein>
<keyword id="KW-1003">Cell membrane</keyword>
<keyword id="KW-1015">Disulfide bond</keyword>
<keyword id="KW-0297">G-protein coupled receptor</keyword>
<keyword id="KW-0325">Glycoprotein</keyword>
<keyword id="KW-0472">Membrane</keyword>
<keyword id="KW-0552">Olfaction</keyword>
<keyword id="KW-0675">Receptor</keyword>
<keyword id="KW-1185">Reference proteome</keyword>
<keyword id="KW-0716">Sensory transduction</keyword>
<keyword id="KW-0807">Transducer</keyword>
<keyword id="KW-0812">Transmembrane</keyword>
<keyword id="KW-1133">Transmembrane helix</keyword>
<dbReference type="EMBL" id="AY073320">
    <property type="protein sequence ID" value="AAL60983.1"/>
    <property type="molecule type" value="Genomic_DNA"/>
</dbReference>
<dbReference type="EMBL" id="AY317580">
    <property type="protein sequence ID" value="AAP70977.1"/>
    <property type="molecule type" value="Genomic_DNA"/>
</dbReference>
<dbReference type="CCDS" id="CCDS21695.1"/>
<dbReference type="RefSeq" id="NP_666985.1">
    <property type="nucleotide sequence ID" value="NM_146774.1"/>
</dbReference>
<dbReference type="SMR" id="Q8VG43"/>
<dbReference type="FunCoup" id="Q8VG43">
    <property type="interactions" value="1127"/>
</dbReference>
<dbReference type="STRING" id="10090.ENSMUSP00000150404"/>
<dbReference type="GlyCosmos" id="Q8VG43">
    <property type="glycosylation" value="1 site, No reported glycans"/>
</dbReference>
<dbReference type="GlyGen" id="Q8VG43">
    <property type="glycosylation" value="1 site"/>
</dbReference>
<dbReference type="PaxDb" id="10090-ENSMUSP00000081815"/>
<dbReference type="DNASU" id="258770"/>
<dbReference type="Ensembl" id="ENSMUST00000209670.4">
    <property type="protein sequence ID" value="ENSMUSP00000148150.3"/>
    <property type="gene ID" value="ENSMUSG00000073893.7"/>
</dbReference>
<dbReference type="Ensembl" id="ENSMUST00000210420.2">
    <property type="protein sequence ID" value="ENSMUSP00000147272.2"/>
    <property type="gene ID" value="ENSMUSG00000073893.7"/>
</dbReference>
<dbReference type="Ensembl" id="ENSMUST00000216937.3">
    <property type="protein sequence ID" value="ENSMUSP00000150404.3"/>
    <property type="gene ID" value="ENSMUSG00000073893.7"/>
</dbReference>
<dbReference type="GeneID" id="258770"/>
<dbReference type="KEGG" id="mmu:258770"/>
<dbReference type="UCSC" id="uc009jbo.1">
    <property type="organism name" value="mouse"/>
</dbReference>
<dbReference type="AGR" id="MGI:3030306"/>
<dbReference type="CTD" id="258770"/>
<dbReference type="MGI" id="MGI:3030306">
    <property type="gene designation" value="Or5p52"/>
</dbReference>
<dbReference type="VEuPathDB" id="HostDB:ENSMUSG00000073893"/>
<dbReference type="eggNOG" id="ENOG502SKA1">
    <property type="taxonomic scope" value="Eukaryota"/>
</dbReference>
<dbReference type="GeneTree" id="ENSGT01130000278279"/>
<dbReference type="HOGENOM" id="CLU_012526_1_0_1"/>
<dbReference type="InParanoid" id="Q8VG43"/>
<dbReference type="OMA" id="GSCINAW"/>
<dbReference type="OrthoDB" id="9598168at2759"/>
<dbReference type="PhylomeDB" id="Q8VG43"/>
<dbReference type="TreeFam" id="TF338848"/>
<dbReference type="BioGRID-ORCS" id="258770">
    <property type="hits" value="0 hits in 70 CRISPR screens"/>
</dbReference>
<dbReference type="PRO" id="PR:Q8VG43"/>
<dbReference type="Proteomes" id="UP000000589">
    <property type="component" value="Chromosome 7"/>
</dbReference>
<dbReference type="RNAct" id="Q8VG43">
    <property type="molecule type" value="protein"/>
</dbReference>
<dbReference type="ExpressionAtlas" id="Q8VG43">
    <property type="expression patterns" value="baseline and differential"/>
</dbReference>
<dbReference type="GO" id="GO:0016020">
    <property type="term" value="C:membrane"/>
    <property type="evidence" value="ECO:0000247"/>
    <property type="project" value="MGI"/>
</dbReference>
<dbReference type="GO" id="GO:0005886">
    <property type="term" value="C:plasma membrane"/>
    <property type="evidence" value="ECO:0007669"/>
    <property type="project" value="UniProtKB-SubCell"/>
</dbReference>
<dbReference type="GO" id="GO:0004930">
    <property type="term" value="F:G protein-coupled receptor activity"/>
    <property type="evidence" value="ECO:0007669"/>
    <property type="project" value="UniProtKB-KW"/>
</dbReference>
<dbReference type="GO" id="GO:0004984">
    <property type="term" value="F:olfactory receptor activity"/>
    <property type="evidence" value="ECO:0000247"/>
    <property type="project" value="MGI"/>
</dbReference>
<dbReference type="GO" id="GO:0007186">
    <property type="term" value="P:G protein-coupled receptor signaling pathway"/>
    <property type="evidence" value="ECO:0000247"/>
    <property type="project" value="MGI"/>
</dbReference>
<dbReference type="GO" id="GO:0007608">
    <property type="term" value="P:sensory perception of smell"/>
    <property type="evidence" value="ECO:0000247"/>
    <property type="project" value="MGI"/>
</dbReference>
<dbReference type="FunFam" id="1.20.1070.10:FF:000004">
    <property type="entry name" value="Olfactory receptor"/>
    <property type="match status" value="1"/>
</dbReference>
<dbReference type="Gene3D" id="1.20.1070.10">
    <property type="entry name" value="Rhodopsin 7-helix transmembrane proteins"/>
    <property type="match status" value="1"/>
</dbReference>
<dbReference type="InterPro" id="IPR000276">
    <property type="entry name" value="GPCR_Rhodpsn"/>
</dbReference>
<dbReference type="InterPro" id="IPR017452">
    <property type="entry name" value="GPCR_Rhodpsn_7TM"/>
</dbReference>
<dbReference type="InterPro" id="IPR000725">
    <property type="entry name" value="Olfact_rcpt"/>
</dbReference>
<dbReference type="PANTHER" id="PTHR48018">
    <property type="entry name" value="OLFACTORY RECEPTOR"/>
    <property type="match status" value="1"/>
</dbReference>
<dbReference type="Pfam" id="PF13853">
    <property type="entry name" value="7tm_4"/>
    <property type="match status" value="1"/>
</dbReference>
<dbReference type="PRINTS" id="PR00237">
    <property type="entry name" value="GPCRRHODOPSN"/>
</dbReference>
<dbReference type="PRINTS" id="PR00245">
    <property type="entry name" value="OLFACTORYR"/>
</dbReference>
<dbReference type="SMART" id="SM01381">
    <property type="entry name" value="7TM_GPCR_Srsx"/>
    <property type="match status" value="1"/>
</dbReference>
<dbReference type="SUPFAM" id="SSF81321">
    <property type="entry name" value="Family A G protein-coupled receptor-like"/>
    <property type="match status" value="1"/>
</dbReference>
<dbReference type="PROSITE" id="PS00237">
    <property type="entry name" value="G_PROTEIN_RECEP_F1_1"/>
    <property type="match status" value="1"/>
</dbReference>
<dbReference type="PROSITE" id="PS50262">
    <property type="entry name" value="G_PROTEIN_RECEP_F1_2"/>
    <property type="match status" value="1"/>
</dbReference>
<organism>
    <name type="scientific">Mus musculus</name>
    <name type="common">Mouse</name>
    <dbReference type="NCBI Taxonomy" id="10090"/>
    <lineage>
        <taxon>Eukaryota</taxon>
        <taxon>Metazoa</taxon>
        <taxon>Chordata</taxon>
        <taxon>Craniata</taxon>
        <taxon>Vertebrata</taxon>
        <taxon>Euteleostomi</taxon>
        <taxon>Mammalia</taxon>
        <taxon>Eutheria</taxon>
        <taxon>Euarchontoglires</taxon>
        <taxon>Glires</taxon>
        <taxon>Rodentia</taxon>
        <taxon>Myomorpha</taxon>
        <taxon>Muroidea</taxon>
        <taxon>Muridae</taxon>
        <taxon>Murinae</taxon>
        <taxon>Mus</taxon>
        <taxon>Mus</taxon>
    </lineage>
</organism>
<sequence length="310" mass="34090">MEAENHTTVAELIILGLTEDPKLCIVFFVIFLGVYIITLVGNISIITLIRISSQLHTPMYLFLSHLAFVDIVFSTSVSVIMLMELLGHGLVLSVATCAAQLCMTVSFGSAECFLLAAMAYDRYVAICSPLLYSTLMSSRVCFLLLGISYVGGFVNGWTFTGCVLSLSFCGPTQINHFFCDFSPLLKVSCSDVSIIGIIPSISSGSIIVVTVFVIAVSYIYILITILKMRSTEGRHKAFSTCTSHLTAVTLFYGTITVIYVMPKSSYSTEQNKVISLFYTVVIPMLNPLIYSLRNRDVKDALRKAIVRVYS</sequence>